<proteinExistence type="inferred from homology"/>
<name>RPOA_DEHMC</name>
<keyword id="KW-0240">DNA-directed RNA polymerase</keyword>
<keyword id="KW-0548">Nucleotidyltransferase</keyword>
<keyword id="KW-0804">Transcription</keyword>
<keyword id="KW-0808">Transferase</keyword>
<feature type="chain" id="PRO_0000225271" description="DNA-directed RNA polymerase subunit alpha">
    <location>
        <begin position="1"/>
        <end position="330"/>
    </location>
</feature>
<feature type="region of interest" description="Alpha N-terminal domain (alpha-NTD)" evidence="1">
    <location>
        <begin position="1"/>
        <end position="225"/>
    </location>
</feature>
<feature type="region of interest" description="Alpha C-terminal domain (alpha-CTD)" evidence="1">
    <location>
        <begin position="237"/>
        <end position="330"/>
    </location>
</feature>
<dbReference type="EC" id="2.7.7.6" evidence="1"/>
<dbReference type="EMBL" id="AJ965256">
    <property type="protein sequence ID" value="CAI82667.1"/>
    <property type="molecule type" value="Genomic_DNA"/>
</dbReference>
<dbReference type="RefSeq" id="WP_011309020.1">
    <property type="nucleotide sequence ID" value="NC_007356.1"/>
</dbReference>
<dbReference type="SMR" id="Q3ZZP6"/>
<dbReference type="KEGG" id="deh:cbdbA466"/>
<dbReference type="HOGENOM" id="CLU_053084_0_1_0"/>
<dbReference type="Proteomes" id="UP000000433">
    <property type="component" value="Chromosome"/>
</dbReference>
<dbReference type="GO" id="GO:0005737">
    <property type="term" value="C:cytoplasm"/>
    <property type="evidence" value="ECO:0007669"/>
    <property type="project" value="UniProtKB-ARBA"/>
</dbReference>
<dbReference type="GO" id="GO:0000428">
    <property type="term" value="C:DNA-directed RNA polymerase complex"/>
    <property type="evidence" value="ECO:0007669"/>
    <property type="project" value="UniProtKB-KW"/>
</dbReference>
<dbReference type="GO" id="GO:0003677">
    <property type="term" value="F:DNA binding"/>
    <property type="evidence" value="ECO:0007669"/>
    <property type="project" value="UniProtKB-UniRule"/>
</dbReference>
<dbReference type="GO" id="GO:0003899">
    <property type="term" value="F:DNA-directed RNA polymerase activity"/>
    <property type="evidence" value="ECO:0007669"/>
    <property type="project" value="UniProtKB-UniRule"/>
</dbReference>
<dbReference type="GO" id="GO:0046983">
    <property type="term" value="F:protein dimerization activity"/>
    <property type="evidence" value="ECO:0007669"/>
    <property type="project" value="InterPro"/>
</dbReference>
<dbReference type="GO" id="GO:0006351">
    <property type="term" value="P:DNA-templated transcription"/>
    <property type="evidence" value="ECO:0007669"/>
    <property type="project" value="UniProtKB-UniRule"/>
</dbReference>
<dbReference type="CDD" id="cd06928">
    <property type="entry name" value="RNAP_alpha_NTD"/>
    <property type="match status" value="1"/>
</dbReference>
<dbReference type="FunFam" id="1.10.150.20:FF:000166">
    <property type="entry name" value="DNA-directed RNA polymerase subunit alpha"/>
    <property type="match status" value="1"/>
</dbReference>
<dbReference type="FunFam" id="2.170.120.12:FF:000001">
    <property type="entry name" value="DNA-directed RNA polymerase subunit alpha"/>
    <property type="match status" value="1"/>
</dbReference>
<dbReference type="Gene3D" id="1.10.150.20">
    <property type="entry name" value="5' to 3' exonuclease, C-terminal subdomain"/>
    <property type="match status" value="1"/>
</dbReference>
<dbReference type="Gene3D" id="2.170.120.12">
    <property type="entry name" value="DNA-directed RNA polymerase, insert domain"/>
    <property type="match status" value="1"/>
</dbReference>
<dbReference type="Gene3D" id="3.30.1360.10">
    <property type="entry name" value="RNA polymerase, RBP11-like subunit"/>
    <property type="match status" value="1"/>
</dbReference>
<dbReference type="HAMAP" id="MF_00059">
    <property type="entry name" value="RNApol_bact_RpoA"/>
    <property type="match status" value="1"/>
</dbReference>
<dbReference type="InterPro" id="IPR011262">
    <property type="entry name" value="DNA-dir_RNA_pol_insert"/>
</dbReference>
<dbReference type="InterPro" id="IPR011263">
    <property type="entry name" value="DNA-dir_RNA_pol_RpoA/D/Rpb3"/>
</dbReference>
<dbReference type="InterPro" id="IPR011773">
    <property type="entry name" value="DNA-dir_RpoA"/>
</dbReference>
<dbReference type="InterPro" id="IPR036603">
    <property type="entry name" value="RBP11-like"/>
</dbReference>
<dbReference type="InterPro" id="IPR011260">
    <property type="entry name" value="RNAP_asu_C"/>
</dbReference>
<dbReference type="InterPro" id="IPR036643">
    <property type="entry name" value="RNApol_insert_sf"/>
</dbReference>
<dbReference type="NCBIfam" id="NF003513">
    <property type="entry name" value="PRK05182.1-2"/>
    <property type="match status" value="1"/>
</dbReference>
<dbReference type="NCBIfam" id="NF003519">
    <property type="entry name" value="PRK05182.2-5"/>
    <property type="match status" value="1"/>
</dbReference>
<dbReference type="NCBIfam" id="TIGR02027">
    <property type="entry name" value="rpoA"/>
    <property type="match status" value="1"/>
</dbReference>
<dbReference type="Pfam" id="PF01000">
    <property type="entry name" value="RNA_pol_A_bac"/>
    <property type="match status" value="1"/>
</dbReference>
<dbReference type="Pfam" id="PF03118">
    <property type="entry name" value="RNA_pol_A_CTD"/>
    <property type="match status" value="1"/>
</dbReference>
<dbReference type="Pfam" id="PF01193">
    <property type="entry name" value="RNA_pol_L"/>
    <property type="match status" value="1"/>
</dbReference>
<dbReference type="SMART" id="SM00662">
    <property type="entry name" value="RPOLD"/>
    <property type="match status" value="1"/>
</dbReference>
<dbReference type="SUPFAM" id="SSF47789">
    <property type="entry name" value="C-terminal domain of RNA polymerase alpha subunit"/>
    <property type="match status" value="1"/>
</dbReference>
<dbReference type="SUPFAM" id="SSF56553">
    <property type="entry name" value="Insert subdomain of RNA polymerase alpha subunit"/>
    <property type="match status" value="1"/>
</dbReference>
<dbReference type="SUPFAM" id="SSF55257">
    <property type="entry name" value="RBP11-like subunits of RNA polymerase"/>
    <property type="match status" value="1"/>
</dbReference>
<sequence length="330" mass="36488">MSDLAIPTISCTESDGKYGRFVVEPLEKGFGTTMGNSLRRILLSYLDGVAITRVRIDGIQHEFCALPKAKEDTLDFLLNLKNIRVESLSGLEGILYLRASGSKVVTAADIEPSNDFEVVNPELYLLTLDSDDAVLNVELEVELGRGYRPPESAENTPIGTIPVDAIFTPIRKVNFTTEPMHVGRETSLERLVLEVWTDGTVEPATAVSRSADILVKQFASLVSHSKVVAEIEASEPVKYTIPEEKYNMPIEQLDLSVRAVNCLRHAGITTVGEVINRGTKELLTLRNFGLKSLTELEDRLKTIGLSLNPEDELFEEAENNKKKNKGIDED</sequence>
<organism>
    <name type="scientific">Dehalococcoides mccartyi (strain CBDB1)</name>
    <dbReference type="NCBI Taxonomy" id="255470"/>
    <lineage>
        <taxon>Bacteria</taxon>
        <taxon>Bacillati</taxon>
        <taxon>Chloroflexota</taxon>
        <taxon>Dehalococcoidia</taxon>
        <taxon>Dehalococcoidales</taxon>
        <taxon>Dehalococcoidaceae</taxon>
        <taxon>Dehalococcoides</taxon>
    </lineage>
</organism>
<gene>
    <name evidence="1" type="primary">rpoA</name>
    <name type="ordered locus">cbdbA466</name>
</gene>
<evidence type="ECO:0000255" key="1">
    <source>
        <dbReference type="HAMAP-Rule" id="MF_00059"/>
    </source>
</evidence>
<protein>
    <recommendedName>
        <fullName evidence="1">DNA-directed RNA polymerase subunit alpha</fullName>
        <shortName evidence="1">RNAP subunit alpha</shortName>
        <ecNumber evidence="1">2.7.7.6</ecNumber>
    </recommendedName>
    <alternativeName>
        <fullName evidence="1">RNA polymerase subunit alpha</fullName>
    </alternativeName>
    <alternativeName>
        <fullName evidence="1">Transcriptase subunit alpha</fullName>
    </alternativeName>
</protein>
<comment type="function">
    <text evidence="1">DNA-dependent RNA polymerase catalyzes the transcription of DNA into RNA using the four ribonucleoside triphosphates as substrates.</text>
</comment>
<comment type="catalytic activity">
    <reaction evidence="1">
        <text>RNA(n) + a ribonucleoside 5'-triphosphate = RNA(n+1) + diphosphate</text>
        <dbReference type="Rhea" id="RHEA:21248"/>
        <dbReference type="Rhea" id="RHEA-COMP:14527"/>
        <dbReference type="Rhea" id="RHEA-COMP:17342"/>
        <dbReference type="ChEBI" id="CHEBI:33019"/>
        <dbReference type="ChEBI" id="CHEBI:61557"/>
        <dbReference type="ChEBI" id="CHEBI:140395"/>
        <dbReference type="EC" id="2.7.7.6"/>
    </reaction>
</comment>
<comment type="subunit">
    <text evidence="1">Homodimer. The RNAP catalytic core consists of 2 alpha, 1 beta, 1 beta' and 1 omega subunit. When a sigma factor is associated with the core the holoenzyme is formed, which can initiate transcription.</text>
</comment>
<comment type="domain">
    <text evidence="1">The N-terminal domain is essential for RNAP assembly and basal transcription, whereas the C-terminal domain is involved in interaction with transcriptional regulators and with upstream promoter elements.</text>
</comment>
<comment type="similarity">
    <text evidence="1">Belongs to the RNA polymerase alpha chain family.</text>
</comment>
<reference key="1">
    <citation type="journal article" date="2005" name="Nat. Biotechnol.">
        <title>Genome sequence of the chlorinated compound-respiring bacterium Dehalococcoides species strain CBDB1.</title>
        <authorList>
            <person name="Kube M."/>
            <person name="Beck A."/>
            <person name="Zinder S.H."/>
            <person name="Kuhl H."/>
            <person name="Reinhardt R."/>
            <person name="Adrian L."/>
        </authorList>
    </citation>
    <scope>NUCLEOTIDE SEQUENCE [LARGE SCALE GENOMIC DNA]</scope>
    <source>
        <strain>CBDB1</strain>
    </source>
</reference>
<accession>Q3ZZP6</accession>